<sequence length="368" mass="41218">MSDNSQKKVIVGMSGGVDSSVSAYLLQQQGYHVEGLFMKNWEEDDDTEYCSAATDLADAQAVCDKLGIELHTVNFAAEYWDNVFELFLEEYKAGRTPNPDILCNKEIKFKAFLEFAAEDLGADYIATGHYVRRHDVDGKSRLLRGMDGNKDQSYFLYTLSHEQIAQSLFPVGELEKPQVRKIAEELELATAKKKDSTGICFIGERKFTDFLARYLPAQPGPILSVDDNKPMGQHQGLMYHTLGQRKGLGIGGVKDGGEDPWYVVDKDVANNILYVAQGHEHPRLMSYGLIAQQLHWVDRQPLTAELRCTVKTRYRQADISCTVTPLGDDRITVRFDEPFAAVTPGQSAVFYLDDVCLGGGIIEERLQE</sequence>
<name>MNMA_PECAS</name>
<gene>
    <name evidence="1" type="primary">mnmA</name>
    <name type="synonym">trmU</name>
    <name type="ordered locus">ECA2442</name>
</gene>
<protein>
    <recommendedName>
        <fullName evidence="1">tRNA-specific 2-thiouridylase MnmA</fullName>
        <ecNumber evidence="1">2.8.1.13</ecNumber>
    </recommendedName>
</protein>
<feature type="chain" id="PRO_0000121591" description="tRNA-specific 2-thiouridylase MnmA">
    <location>
        <begin position="1"/>
        <end position="368"/>
    </location>
</feature>
<feature type="region of interest" description="Interaction with target base in tRNA" evidence="1">
    <location>
        <begin position="98"/>
        <end position="100"/>
    </location>
</feature>
<feature type="region of interest" description="Interaction with tRNA" evidence="1">
    <location>
        <begin position="150"/>
        <end position="152"/>
    </location>
</feature>
<feature type="region of interest" description="Interaction with tRNA" evidence="1">
    <location>
        <begin position="313"/>
        <end position="314"/>
    </location>
</feature>
<feature type="active site" description="Nucleophile" evidence="1">
    <location>
        <position position="103"/>
    </location>
</feature>
<feature type="active site" description="Cysteine persulfide intermediate" evidence="1">
    <location>
        <position position="200"/>
    </location>
</feature>
<feature type="binding site" evidence="1">
    <location>
        <begin position="12"/>
        <end position="19"/>
    </location>
    <ligand>
        <name>ATP</name>
        <dbReference type="ChEBI" id="CHEBI:30616"/>
    </ligand>
</feature>
<feature type="binding site" evidence="1">
    <location>
        <position position="38"/>
    </location>
    <ligand>
        <name>ATP</name>
        <dbReference type="ChEBI" id="CHEBI:30616"/>
    </ligand>
</feature>
<feature type="binding site" evidence="1">
    <location>
        <position position="128"/>
    </location>
    <ligand>
        <name>ATP</name>
        <dbReference type="ChEBI" id="CHEBI:30616"/>
    </ligand>
</feature>
<feature type="site" description="Interaction with tRNA" evidence="1">
    <location>
        <position position="129"/>
    </location>
</feature>
<feature type="site" description="Interaction with tRNA" evidence="1">
    <location>
        <position position="346"/>
    </location>
</feature>
<feature type="disulfide bond" description="Alternate" evidence="1">
    <location>
        <begin position="103"/>
        <end position="200"/>
    </location>
</feature>
<comment type="function">
    <text evidence="1">Catalyzes the 2-thiolation of uridine at the wobble position (U34) of tRNA(Lys), tRNA(Glu) and tRNA(Gln), leading to the formation of s(2)U34, the first step of tRNA-mnm(5)s(2)U34 synthesis. Sulfur is provided by IscS, via a sulfur-relay system. Binds ATP and its substrate tRNAs.</text>
</comment>
<comment type="catalytic activity">
    <reaction evidence="1">
        <text>S-sulfanyl-L-cysteinyl-[protein] + uridine(34) in tRNA + AH2 + ATP = 2-thiouridine(34) in tRNA + L-cysteinyl-[protein] + A + AMP + diphosphate + H(+)</text>
        <dbReference type="Rhea" id="RHEA:47032"/>
        <dbReference type="Rhea" id="RHEA-COMP:10131"/>
        <dbReference type="Rhea" id="RHEA-COMP:11726"/>
        <dbReference type="Rhea" id="RHEA-COMP:11727"/>
        <dbReference type="Rhea" id="RHEA-COMP:11728"/>
        <dbReference type="ChEBI" id="CHEBI:13193"/>
        <dbReference type="ChEBI" id="CHEBI:15378"/>
        <dbReference type="ChEBI" id="CHEBI:17499"/>
        <dbReference type="ChEBI" id="CHEBI:29950"/>
        <dbReference type="ChEBI" id="CHEBI:30616"/>
        <dbReference type="ChEBI" id="CHEBI:33019"/>
        <dbReference type="ChEBI" id="CHEBI:61963"/>
        <dbReference type="ChEBI" id="CHEBI:65315"/>
        <dbReference type="ChEBI" id="CHEBI:87170"/>
        <dbReference type="ChEBI" id="CHEBI:456215"/>
        <dbReference type="EC" id="2.8.1.13"/>
    </reaction>
</comment>
<comment type="subunit">
    <text evidence="1">Interacts with TusE.</text>
</comment>
<comment type="subcellular location">
    <subcellularLocation>
        <location evidence="1">Cytoplasm</location>
    </subcellularLocation>
</comment>
<comment type="similarity">
    <text evidence="1">Belongs to the MnmA/TRMU family.</text>
</comment>
<organism>
    <name type="scientific">Pectobacterium atrosepticum (strain SCRI 1043 / ATCC BAA-672)</name>
    <name type="common">Erwinia carotovora subsp. atroseptica</name>
    <dbReference type="NCBI Taxonomy" id="218491"/>
    <lineage>
        <taxon>Bacteria</taxon>
        <taxon>Pseudomonadati</taxon>
        <taxon>Pseudomonadota</taxon>
        <taxon>Gammaproteobacteria</taxon>
        <taxon>Enterobacterales</taxon>
        <taxon>Pectobacteriaceae</taxon>
        <taxon>Pectobacterium</taxon>
    </lineage>
</organism>
<reference key="1">
    <citation type="journal article" date="2004" name="Proc. Natl. Acad. Sci. U.S.A.">
        <title>Genome sequence of the enterobacterial phytopathogen Erwinia carotovora subsp. atroseptica and characterization of virulence factors.</title>
        <authorList>
            <person name="Bell K.S."/>
            <person name="Sebaihia M."/>
            <person name="Pritchard L."/>
            <person name="Holden M.T.G."/>
            <person name="Hyman L.J."/>
            <person name="Holeva M.C."/>
            <person name="Thomson N.R."/>
            <person name="Bentley S.D."/>
            <person name="Churcher L.J.C."/>
            <person name="Mungall K."/>
            <person name="Atkin R."/>
            <person name="Bason N."/>
            <person name="Brooks K."/>
            <person name="Chillingworth T."/>
            <person name="Clark K."/>
            <person name="Doggett J."/>
            <person name="Fraser A."/>
            <person name="Hance Z."/>
            <person name="Hauser H."/>
            <person name="Jagels K."/>
            <person name="Moule S."/>
            <person name="Norbertczak H."/>
            <person name="Ormond D."/>
            <person name="Price C."/>
            <person name="Quail M.A."/>
            <person name="Sanders M."/>
            <person name="Walker D."/>
            <person name="Whitehead S."/>
            <person name="Salmond G.P.C."/>
            <person name="Birch P.R.J."/>
            <person name="Parkhill J."/>
            <person name="Toth I.K."/>
        </authorList>
    </citation>
    <scope>NUCLEOTIDE SEQUENCE [LARGE SCALE GENOMIC DNA]</scope>
    <source>
        <strain>SCRI 1043 / ATCC BAA-672</strain>
    </source>
</reference>
<proteinExistence type="inferred from homology"/>
<dbReference type="EC" id="2.8.1.13" evidence="1"/>
<dbReference type="EMBL" id="BX950851">
    <property type="protein sequence ID" value="CAG75344.1"/>
    <property type="molecule type" value="Genomic_DNA"/>
</dbReference>
<dbReference type="RefSeq" id="WP_011093993.1">
    <property type="nucleotide sequence ID" value="NC_004547.2"/>
</dbReference>
<dbReference type="SMR" id="Q6D4E9"/>
<dbReference type="STRING" id="218491.ECA2442"/>
<dbReference type="GeneID" id="57208844"/>
<dbReference type="KEGG" id="eca:ECA2442"/>
<dbReference type="PATRIC" id="fig|218491.5.peg.2473"/>
<dbReference type="eggNOG" id="COG0482">
    <property type="taxonomic scope" value="Bacteria"/>
</dbReference>
<dbReference type="HOGENOM" id="CLU_035188_1_0_6"/>
<dbReference type="OrthoDB" id="9800696at2"/>
<dbReference type="Proteomes" id="UP000007966">
    <property type="component" value="Chromosome"/>
</dbReference>
<dbReference type="GO" id="GO:0005737">
    <property type="term" value="C:cytoplasm"/>
    <property type="evidence" value="ECO:0007669"/>
    <property type="project" value="UniProtKB-SubCell"/>
</dbReference>
<dbReference type="GO" id="GO:0005524">
    <property type="term" value="F:ATP binding"/>
    <property type="evidence" value="ECO:0007669"/>
    <property type="project" value="UniProtKB-KW"/>
</dbReference>
<dbReference type="GO" id="GO:0000049">
    <property type="term" value="F:tRNA binding"/>
    <property type="evidence" value="ECO:0007669"/>
    <property type="project" value="UniProtKB-KW"/>
</dbReference>
<dbReference type="GO" id="GO:0103016">
    <property type="term" value="F:tRNA-uridine 2-sulfurtransferase activity"/>
    <property type="evidence" value="ECO:0007669"/>
    <property type="project" value="UniProtKB-EC"/>
</dbReference>
<dbReference type="GO" id="GO:0002143">
    <property type="term" value="P:tRNA wobble position uridine thiolation"/>
    <property type="evidence" value="ECO:0007669"/>
    <property type="project" value="TreeGrafter"/>
</dbReference>
<dbReference type="CDD" id="cd01998">
    <property type="entry name" value="MnmA_TRMU-like"/>
    <property type="match status" value="1"/>
</dbReference>
<dbReference type="FunFam" id="2.30.30.280:FF:000001">
    <property type="entry name" value="tRNA-specific 2-thiouridylase MnmA"/>
    <property type="match status" value="1"/>
</dbReference>
<dbReference type="FunFam" id="2.40.30.10:FF:000023">
    <property type="entry name" value="tRNA-specific 2-thiouridylase MnmA"/>
    <property type="match status" value="1"/>
</dbReference>
<dbReference type="FunFam" id="3.40.50.620:FF:000004">
    <property type="entry name" value="tRNA-specific 2-thiouridylase MnmA"/>
    <property type="match status" value="1"/>
</dbReference>
<dbReference type="Gene3D" id="2.30.30.280">
    <property type="entry name" value="Adenine nucleotide alpha hydrolases-like domains"/>
    <property type="match status" value="1"/>
</dbReference>
<dbReference type="Gene3D" id="3.40.50.620">
    <property type="entry name" value="HUPs"/>
    <property type="match status" value="1"/>
</dbReference>
<dbReference type="Gene3D" id="2.40.30.10">
    <property type="entry name" value="Translation factors"/>
    <property type="match status" value="1"/>
</dbReference>
<dbReference type="HAMAP" id="MF_00144">
    <property type="entry name" value="tRNA_thiouridyl_MnmA"/>
    <property type="match status" value="1"/>
</dbReference>
<dbReference type="InterPro" id="IPR004506">
    <property type="entry name" value="MnmA-like"/>
</dbReference>
<dbReference type="InterPro" id="IPR046885">
    <property type="entry name" value="MnmA-like_C"/>
</dbReference>
<dbReference type="InterPro" id="IPR046884">
    <property type="entry name" value="MnmA-like_central"/>
</dbReference>
<dbReference type="InterPro" id="IPR023382">
    <property type="entry name" value="MnmA-like_central_sf"/>
</dbReference>
<dbReference type="InterPro" id="IPR014729">
    <property type="entry name" value="Rossmann-like_a/b/a_fold"/>
</dbReference>
<dbReference type="NCBIfam" id="NF001138">
    <property type="entry name" value="PRK00143.1"/>
    <property type="match status" value="1"/>
</dbReference>
<dbReference type="NCBIfam" id="TIGR00420">
    <property type="entry name" value="trmU"/>
    <property type="match status" value="1"/>
</dbReference>
<dbReference type="PANTHER" id="PTHR11933:SF5">
    <property type="entry name" value="MITOCHONDRIAL TRNA-SPECIFIC 2-THIOURIDYLASE 1"/>
    <property type="match status" value="1"/>
</dbReference>
<dbReference type="PANTHER" id="PTHR11933">
    <property type="entry name" value="TRNA 5-METHYLAMINOMETHYL-2-THIOURIDYLATE -METHYLTRANSFERASE"/>
    <property type="match status" value="1"/>
</dbReference>
<dbReference type="Pfam" id="PF03054">
    <property type="entry name" value="tRNA_Me_trans"/>
    <property type="match status" value="1"/>
</dbReference>
<dbReference type="Pfam" id="PF20258">
    <property type="entry name" value="tRNA_Me_trans_C"/>
    <property type="match status" value="1"/>
</dbReference>
<dbReference type="Pfam" id="PF20259">
    <property type="entry name" value="tRNA_Me_trans_M"/>
    <property type="match status" value="1"/>
</dbReference>
<dbReference type="SUPFAM" id="SSF52402">
    <property type="entry name" value="Adenine nucleotide alpha hydrolases-like"/>
    <property type="match status" value="1"/>
</dbReference>
<evidence type="ECO:0000255" key="1">
    <source>
        <dbReference type="HAMAP-Rule" id="MF_00144"/>
    </source>
</evidence>
<keyword id="KW-0067">ATP-binding</keyword>
<keyword id="KW-0963">Cytoplasm</keyword>
<keyword id="KW-1015">Disulfide bond</keyword>
<keyword id="KW-0547">Nucleotide-binding</keyword>
<keyword id="KW-1185">Reference proteome</keyword>
<keyword id="KW-0694">RNA-binding</keyword>
<keyword id="KW-0808">Transferase</keyword>
<keyword id="KW-0819">tRNA processing</keyword>
<keyword id="KW-0820">tRNA-binding</keyword>
<accession>Q6D4E9</accession>